<organism>
    <name type="scientific">Brucella ovis (strain ATCC 25840 / 63/290 / NCTC 10512)</name>
    <dbReference type="NCBI Taxonomy" id="444178"/>
    <lineage>
        <taxon>Bacteria</taxon>
        <taxon>Pseudomonadati</taxon>
        <taxon>Pseudomonadota</taxon>
        <taxon>Alphaproteobacteria</taxon>
        <taxon>Hyphomicrobiales</taxon>
        <taxon>Brucellaceae</taxon>
        <taxon>Brucella/Ochrobactrum group</taxon>
        <taxon>Brucella</taxon>
    </lineage>
</organism>
<protein>
    <recommendedName>
        <fullName evidence="2">NADH-quinone oxidoreductase subunit B</fullName>
        <ecNumber evidence="2">7.1.1.-</ecNumber>
    </recommendedName>
    <alternativeName>
        <fullName evidence="2">NADH dehydrogenase I subunit B</fullName>
    </alternativeName>
    <alternativeName>
        <fullName evidence="2">NDH-1 subunit B</fullName>
    </alternativeName>
</protein>
<comment type="function">
    <text evidence="1">NDH-1 shuttles electrons from NADH, via FMN and iron-sulfur (Fe-S) centers, to quinones in the respiratory chain. Couples the redox reaction to proton translocation (for every two electrons transferred, four hydrogen ions are translocated across the cytoplasmic membrane), and thus conserves the redox energy in a proton gradient (By similarity).</text>
</comment>
<comment type="catalytic activity">
    <reaction evidence="2">
        <text>a quinone + NADH + 5 H(+)(in) = a quinol + NAD(+) + 4 H(+)(out)</text>
        <dbReference type="Rhea" id="RHEA:57888"/>
        <dbReference type="ChEBI" id="CHEBI:15378"/>
        <dbReference type="ChEBI" id="CHEBI:24646"/>
        <dbReference type="ChEBI" id="CHEBI:57540"/>
        <dbReference type="ChEBI" id="CHEBI:57945"/>
        <dbReference type="ChEBI" id="CHEBI:132124"/>
    </reaction>
</comment>
<comment type="cofactor">
    <cofactor evidence="2">
        <name>[4Fe-4S] cluster</name>
        <dbReference type="ChEBI" id="CHEBI:49883"/>
    </cofactor>
    <text evidence="2">Binds 1 [4Fe-4S] cluster.</text>
</comment>
<comment type="subunit">
    <text evidence="2">NDH-1 is composed of 14 different subunits. Subunits NuoB, C, D, E, F, and G constitute the peripheral sector of the complex.</text>
</comment>
<comment type="subcellular location">
    <subcellularLocation>
        <location evidence="2">Cell inner membrane</location>
        <topology evidence="2">Peripheral membrane protein</topology>
        <orientation evidence="2">Cytoplasmic side</orientation>
    </subcellularLocation>
</comment>
<comment type="similarity">
    <text evidence="2">Belongs to the complex I 20 kDa subunit family.</text>
</comment>
<dbReference type="EC" id="7.1.1.-" evidence="2"/>
<dbReference type="EMBL" id="CP000708">
    <property type="protein sequence ID" value="ABQ60763.1"/>
    <property type="molecule type" value="Genomic_DNA"/>
</dbReference>
<dbReference type="RefSeq" id="WP_002967573.1">
    <property type="nucleotide sequence ID" value="NC_009505.1"/>
</dbReference>
<dbReference type="SMR" id="A5VPY4"/>
<dbReference type="KEGG" id="bov:BOV_0798"/>
<dbReference type="HOGENOM" id="CLU_055737_7_3_5"/>
<dbReference type="PhylomeDB" id="A5VPY4"/>
<dbReference type="Proteomes" id="UP000006383">
    <property type="component" value="Chromosome I"/>
</dbReference>
<dbReference type="GO" id="GO:0005886">
    <property type="term" value="C:plasma membrane"/>
    <property type="evidence" value="ECO:0007669"/>
    <property type="project" value="UniProtKB-SubCell"/>
</dbReference>
<dbReference type="GO" id="GO:0045271">
    <property type="term" value="C:respiratory chain complex I"/>
    <property type="evidence" value="ECO:0007669"/>
    <property type="project" value="TreeGrafter"/>
</dbReference>
<dbReference type="GO" id="GO:0051539">
    <property type="term" value="F:4 iron, 4 sulfur cluster binding"/>
    <property type="evidence" value="ECO:0007669"/>
    <property type="project" value="UniProtKB-KW"/>
</dbReference>
<dbReference type="GO" id="GO:0005506">
    <property type="term" value="F:iron ion binding"/>
    <property type="evidence" value="ECO:0007669"/>
    <property type="project" value="UniProtKB-UniRule"/>
</dbReference>
<dbReference type="GO" id="GO:0008137">
    <property type="term" value="F:NADH dehydrogenase (ubiquinone) activity"/>
    <property type="evidence" value="ECO:0007669"/>
    <property type="project" value="InterPro"/>
</dbReference>
<dbReference type="GO" id="GO:0050136">
    <property type="term" value="F:NADH:ubiquinone reductase (non-electrogenic) activity"/>
    <property type="evidence" value="ECO:0007669"/>
    <property type="project" value="UniProtKB-UniRule"/>
</dbReference>
<dbReference type="GO" id="GO:0048038">
    <property type="term" value="F:quinone binding"/>
    <property type="evidence" value="ECO:0007669"/>
    <property type="project" value="UniProtKB-KW"/>
</dbReference>
<dbReference type="GO" id="GO:0009060">
    <property type="term" value="P:aerobic respiration"/>
    <property type="evidence" value="ECO:0007669"/>
    <property type="project" value="TreeGrafter"/>
</dbReference>
<dbReference type="GO" id="GO:0015990">
    <property type="term" value="P:electron transport coupled proton transport"/>
    <property type="evidence" value="ECO:0007669"/>
    <property type="project" value="TreeGrafter"/>
</dbReference>
<dbReference type="FunFam" id="3.40.50.12280:FF:000001">
    <property type="entry name" value="NADH-quinone oxidoreductase subunit B 2"/>
    <property type="match status" value="1"/>
</dbReference>
<dbReference type="Gene3D" id="3.40.50.12280">
    <property type="match status" value="1"/>
</dbReference>
<dbReference type="HAMAP" id="MF_01356">
    <property type="entry name" value="NDH1_NuoB"/>
    <property type="match status" value="1"/>
</dbReference>
<dbReference type="InterPro" id="IPR006137">
    <property type="entry name" value="NADH_UbQ_OxRdtase-like_20kDa"/>
</dbReference>
<dbReference type="InterPro" id="IPR006138">
    <property type="entry name" value="NADH_UQ_OxRdtase_20Kd_su"/>
</dbReference>
<dbReference type="NCBIfam" id="TIGR01957">
    <property type="entry name" value="nuoB_fam"/>
    <property type="match status" value="1"/>
</dbReference>
<dbReference type="NCBIfam" id="NF005012">
    <property type="entry name" value="PRK06411.1"/>
    <property type="match status" value="1"/>
</dbReference>
<dbReference type="PANTHER" id="PTHR11995">
    <property type="entry name" value="NADH DEHYDROGENASE"/>
    <property type="match status" value="1"/>
</dbReference>
<dbReference type="PANTHER" id="PTHR11995:SF14">
    <property type="entry name" value="NADH DEHYDROGENASE [UBIQUINONE] IRON-SULFUR PROTEIN 7, MITOCHONDRIAL"/>
    <property type="match status" value="1"/>
</dbReference>
<dbReference type="Pfam" id="PF01058">
    <property type="entry name" value="Oxidored_q6"/>
    <property type="match status" value="1"/>
</dbReference>
<dbReference type="SUPFAM" id="SSF56770">
    <property type="entry name" value="HydA/Nqo6-like"/>
    <property type="match status" value="1"/>
</dbReference>
<dbReference type="PROSITE" id="PS01150">
    <property type="entry name" value="COMPLEX1_20K"/>
    <property type="match status" value="1"/>
</dbReference>
<sequence length="193" mass="21032">MGLTGTNTTLVAPQPKGILDPRTGKPVGSDDAFFNDLNGELSDKGFIVTSADALITWARTGSLMWMTFGLACCAVEMMHISMPRYDAERFGIAPRASPRQSDVMIVAGTLTNKMAPALRKVYDQMPEPRYVISMGSCANGGGYYHYSYSVVRGCDRVVPVDIYVPGCPPTAEALLYGILLLQKKIRRTGTIER</sequence>
<evidence type="ECO:0000250" key="1"/>
<evidence type="ECO:0000255" key="2">
    <source>
        <dbReference type="HAMAP-Rule" id="MF_01356"/>
    </source>
</evidence>
<evidence type="ECO:0000256" key="3">
    <source>
        <dbReference type="SAM" id="MobiDB-lite"/>
    </source>
</evidence>
<reference key="1">
    <citation type="journal article" date="2009" name="PLoS ONE">
        <title>Genome degradation in Brucella ovis corresponds with narrowing of its host range and tissue tropism.</title>
        <authorList>
            <person name="Tsolis R.M."/>
            <person name="Seshadri R."/>
            <person name="Santos R.L."/>
            <person name="Sangari F.J."/>
            <person name="Lobo J.M."/>
            <person name="de Jong M.F."/>
            <person name="Ren Q."/>
            <person name="Myers G."/>
            <person name="Brinkac L.M."/>
            <person name="Nelson W.C."/>
            <person name="Deboy R.T."/>
            <person name="Angiuoli S."/>
            <person name="Khouri H."/>
            <person name="Dimitrov G."/>
            <person name="Robinson J.R."/>
            <person name="Mulligan S."/>
            <person name="Walker R.L."/>
            <person name="Elzer P.E."/>
            <person name="Hassan K.A."/>
            <person name="Paulsen I.T."/>
        </authorList>
    </citation>
    <scope>NUCLEOTIDE SEQUENCE [LARGE SCALE GENOMIC DNA]</scope>
    <source>
        <strain>ATCC 25840 / 63/290 / NCTC 10512</strain>
    </source>
</reference>
<feature type="chain" id="PRO_0000358360" description="NADH-quinone oxidoreductase subunit B">
    <location>
        <begin position="1"/>
        <end position="193"/>
    </location>
</feature>
<feature type="region of interest" description="Disordered" evidence="3">
    <location>
        <begin position="1"/>
        <end position="23"/>
    </location>
</feature>
<feature type="compositionally biased region" description="Polar residues" evidence="3">
    <location>
        <begin position="1"/>
        <end position="11"/>
    </location>
</feature>
<feature type="binding site" evidence="2">
    <location>
        <position position="72"/>
    </location>
    <ligand>
        <name>[4Fe-4S] cluster</name>
        <dbReference type="ChEBI" id="CHEBI:49883"/>
    </ligand>
</feature>
<feature type="binding site" evidence="2">
    <location>
        <position position="73"/>
    </location>
    <ligand>
        <name>[4Fe-4S] cluster</name>
        <dbReference type="ChEBI" id="CHEBI:49883"/>
    </ligand>
</feature>
<feature type="binding site" evidence="2">
    <location>
        <position position="137"/>
    </location>
    <ligand>
        <name>[4Fe-4S] cluster</name>
        <dbReference type="ChEBI" id="CHEBI:49883"/>
    </ligand>
</feature>
<feature type="binding site" evidence="2">
    <location>
        <position position="167"/>
    </location>
    <ligand>
        <name>[4Fe-4S] cluster</name>
        <dbReference type="ChEBI" id="CHEBI:49883"/>
    </ligand>
</feature>
<accession>A5VPY4</accession>
<name>NUOB_BRUO2</name>
<proteinExistence type="inferred from homology"/>
<keyword id="KW-0004">4Fe-4S</keyword>
<keyword id="KW-0997">Cell inner membrane</keyword>
<keyword id="KW-1003">Cell membrane</keyword>
<keyword id="KW-0408">Iron</keyword>
<keyword id="KW-0411">Iron-sulfur</keyword>
<keyword id="KW-0472">Membrane</keyword>
<keyword id="KW-0479">Metal-binding</keyword>
<keyword id="KW-0520">NAD</keyword>
<keyword id="KW-0874">Quinone</keyword>
<keyword id="KW-1278">Translocase</keyword>
<keyword id="KW-0813">Transport</keyword>
<keyword id="KW-0830">Ubiquinone</keyword>
<gene>
    <name evidence="2" type="primary">nuoB</name>
    <name type="ordered locus">BOV_0798</name>
</gene>